<organism>
    <name type="scientific">Streptomyces paromomycinus</name>
    <name type="common">Streptomyces rimosus subsp. paromomycinus</name>
    <dbReference type="NCBI Taxonomy" id="92743"/>
    <lineage>
        <taxon>Bacteria</taxon>
        <taxon>Bacillati</taxon>
        <taxon>Actinomycetota</taxon>
        <taxon>Actinomycetes</taxon>
        <taxon>Kitasatosporales</taxon>
        <taxon>Streptomycetaceae</taxon>
        <taxon>Streptomyces</taxon>
    </lineage>
</organism>
<gene>
    <name type="primary">parS</name>
</gene>
<proteinExistence type="inferred from homology"/>
<comment type="function">
    <text evidence="2">Catalyzes the PLP-dependent transamination of 2-deoxy-scyllo-inosose (2-DOI) to form 2-deoxy-scyllo-inosamine (2-DOIA) using L-glutamine as the amino donor. Also catalyzes the transamination of 3-amino-2,3-dideoxy-scyllo-inosose (keto-2-DOIA) into 2-deoxystreptamine (2-DOS).</text>
</comment>
<comment type="catalytic activity">
    <reaction evidence="2">
        <text>2-deoxy-L-scyllo-inosose + L-glutamine = 2-deoxy-scyllo-inosamine + 2-oxoglutaramate</text>
        <dbReference type="Rhea" id="RHEA:34147"/>
        <dbReference type="ChEBI" id="CHEBI:16769"/>
        <dbReference type="ChEBI" id="CHEBI:58359"/>
        <dbReference type="ChEBI" id="CHEBI:64796"/>
        <dbReference type="ChEBI" id="CHEBI:65003"/>
        <dbReference type="EC" id="2.6.1.100"/>
    </reaction>
</comment>
<comment type="catalytic activity">
    <reaction evidence="2">
        <text>3-amino-2,3-dideoxy-scyllo-inosose + L-glutamine = 2-deoxystreptamine + 2-oxoglutaramate</text>
        <dbReference type="Rhea" id="RHEA:34151"/>
        <dbReference type="ChEBI" id="CHEBI:16769"/>
        <dbReference type="ChEBI" id="CHEBI:58359"/>
        <dbReference type="ChEBI" id="CHEBI:65002"/>
        <dbReference type="ChEBI" id="CHEBI:65069"/>
        <dbReference type="EC" id="2.6.1.101"/>
    </reaction>
</comment>
<comment type="cofactor">
    <cofactor evidence="1">
        <name>pyridoxal 5'-phosphate</name>
        <dbReference type="ChEBI" id="CHEBI:597326"/>
    </cofactor>
</comment>
<comment type="pathway">
    <text>Metabolic intermediate biosynthesis; 2-deoxystreptamine biosynthesis; 2-deoxystreptamine from D-glucose 6-phosphate: step 2/4.</text>
</comment>
<comment type="pathway">
    <text>Metabolic intermediate biosynthesis; 2-deoxystreptamine biosynthesis; 2-deoxystreptamine from D-glucose 6-phosphate: step 4/4.</text>
</comment>
<comment type="pathway">
    <text>Antibiotic biosynthesis; paromomycin biosynthesis.</text>
</comment>
<comment type="similarity">
    <text evidence="3">Belongs to the DegT/DnrJ/EryC1 family. L-glutamine:2-deoxy-scyllo-inosose/scyllo-inosose aminotransferase subfamily.</text>
</comment>
<keyword id="KW-0032">Aminotransferase</keyword>
<keyword id="KW-0045">Antibiotic biosynthesis</keyword>
<keyword id="KW-0663">Pyridoxal phosphate</keyword>
<keyword id="KW-0808">Transferase</keyword>
<feature type="chain" id="PRO_0000233022" description="L-glutamine:2-deoxy-scyllo-inosose aminotransferase">
    <location>
        <begin position="1"/>
        <end position="424"/>
    </location>
</feature>
<feature type="modified residue" description="N6-(pyridoxal phosphate)lysine" evidence="1">
    <location>
        <position position="202"/>
    </location>
</feature>
<dbReference type="EC" id="2.6.1.100" evidence="2"/>
<dbReference type="EC" id="2.6.1.101" evidence="2"/>
<dbReference type="EMBL" id="AJ628955">
    <property type="protein sequence ID" value="CAF32373.1"/>
    <property type="molecule type" value="Genomic_DNA"/>
</dbReference>
<dbReference type="RefSeq" id="WP_125051109.1">
    <property type="nucleotide sequence ID" value="NZ_BHZD01000001.1"/>
</dbReference>
<dbReference type="SMR" id="Q2MFP2"/>
<dbReference type="UniPathway" id="UPA00907">
    <property type="reaction ID" value="UER00922"/>
</dbReference>
<dbReference type="UniPathway" id="UPA00907">
    <property type="reaction ID" value="UER00924"/>
</dbReference>
<dbReference type="UniPathway" id="UPA00970"/>
<dbReference type="GO" id="GO:0030170">
    <property type="term" value="F:pyridoxal phosphate binding"/>
    <property type="evidence" value="ECO:0007669"/>
    <property type="project" value="TreeGrafter"/>
</dbReference>
<dbReference type="GO" id="GO:0008483">
    <property type="term" value="F:transaminase activity"/>
    <property type="evidence" value="ECO:0007669"/>
    <property type="project" value="UniProtKB-KW"/>
</dbReference>
<dbReference type="GO" id="GO:0017000">
    <property type="term" value="P:antibiotic biosynthetic process"/>
    <property type="evidence" value="ECO:0007669"/>
    <property type="project" value="UniProtKB-KW"/>
</dbReference>
<dbReference type="GO" id="GO:0000271">
    <property type="term" value="P:polysaccharide biosynthetic process"/>
    <property type="evidence" value="ECO:0007669"/>
    <property type="project" value="TreeGrafter"/>
</dbReference>
<dbReference type="CDD" id="cd00616">
    <property type="entry name" value="AHBA_syn"/>
    <property type="match status" value="1"/>
</dbReference>
<dbReference type="Gene3D" id="3.90.1150.10">
    <property type="entry name" value="Aspartate Aminotransferase, domain 1"/>
    <property type="match status" value="1"/>
</dbReference>
<dbReference type="Gene3D" id="3.40.640.10">
    <property type="entry name" value="Type I PLP-dependent aspartate aminotransferase-like (Major domain)"/>
    <property type="match status" value="1"/>
</dbReference>
<dbReference type="InterPro" id="IPR000653">
    <property type="entry name" value="DegT/StrS_aminotransferase"/>
</dbReference>
<dbReference type="InterPro" id="IPR015424">
    <property type="entry name" value="PyrdxlP-dep_Trfase"/>
</dbReference>
<dbReference type="InterPro" id="IPR015421">
    <property type="entry name" value="PyrdxlP-dep_Trfase_major"/>
</dbReference>
<dbReference type="InterPro" id="IPR015422">
    <property type="entry name" value="PyrdxlP-dep_Trfase_small"/>
</dbReference>
<dbReference type="PANTHER" id="PTHR30244:SF34">
    <property type="entry name" value="DTDP-4-AMINO-4,6-DIDEOXYGALACTOSE TRANSAMINASE"/>
    <property type="match status" value="1"/>
</dbReference>
<dbReference type="PANTHER" id="PTHR30244">
    <property type="entry name" value="TRANSAMINASE"/>
    <property type="match status" value="1"/>
</dbReference>
<dbReference type="Pfam" id="PF01041">
    <property type="entry name" value="DegT_DnrJ_EryC1"/>
    <property type="match status" value="1"/>
</dbReference>
<dbReference type="PIRSF" id="PIRSF000390">
    <property type="entry name" value="PLP_StrS"/>
    <property type="match status" value="1"/>
</dbReference>
<dbReference type="SUPFAM" id="SSF53383">
    <property type="entry name" value="PLP-dependent transferases"/>
    <property type="match status" value="1"/>
</dbReference>
<reference key="1">
    <citation type="submission" date="2004-02" db="EMBL/GenBank/DDBJ databases">
        <title>Analysis and comparison of the biosynthetic gene clusters for the 2-deoxystreptamine-containing aminoglycoside antibiotics ribostamycin, neomycin, lividomycin, paromomycin and butirosin.</title>
        <authorList>
            <person name="Aboshanab K.M.A."/>
            <person name="Schmidt-Beissner H."/>
            <person name="Wehmeier U.F."/>
            <person name="Welzel K."/>
            <person name="Vente A."/>
            <person name="Piepersberg W."/>
        </authorList>
    </citation>
    <scope>NUCLEOTIDE SEQUENCE [GENOMIC DNA]</scope>
    <source>
        <strain>ATCC 14827 / DSM 41429 / JCM 4541 / KCC S-0541 / NBRC 15454 / NRRL 2455 / VKM Ac-605</strain>
    </source>
</reference>
<protein>
    <recommendedName>
        <fullName>L-glutamine:2-deoxy-scyllo-inosose aminotransferase</fullName>
        <shortName>L-glutamine:DOI aminotransferase</shortName>
        <ecNumber evidence="2">2.6.1.100</ecNumber>
    </recommendedName>
    <alternativeName>
        <fullName>L-glutamine:3-amino-2,3-dideoxy-scyllo-inosose aminotransferase</fullName>
        <shortName>L-glutamine:amino-DOI aminotransferase</shortName>
        <ecNumber evidence="2">2.6.1.101</ecNumber>
    </alternativeName>
</protein>
<accession>Q2MFP2</accession>
<sequence>MTRSLAVQGGSPVRTRPWPLWPQPAPGAVRALDGVLTSGRWSISGPYRGAASQERRFAQAFAAYNGVEHCVPAASGTASLMLAMEACGIGAGDEVIVPGLSWVASGSTVLGVNAVPVFCDVDPDTLCLDPAAVESALTERTKAIVVVHLYSAVAAMDALRALADRHGLPLLEDCAQAHGAEYRGVKVGALATAGTFSMQHSKVLTSGEGGAVITRDAEFARRVEHLRADGRCLAGQPVGDGQMELVETGELMGSNRCVSEFQAALLVEQLGVLDEQNERRRRNAALLDKLLADEGYRPQTTSEGTSTRTYYTYAARLPEGELTHVDAAAVGEALTAELGFPVAPCYAPITRNRLYDPRSRGRFALGVQHESRIDPKRFELPVCEEAARRTVTVHHAALLGDESDMHDIATAFGKVVRHGALLTG</sequence>
<name>GLDSA_STREY</name>
<evidence type="ECO:0000250" key="1"/>
<evidence type="ECO:0000250" key="2">
    <source>
        <dbReference type="UniProtKB" id="Q6L739"/>
    </source>
</evidence>
<evidence type="ECO:0000305" key="3"/>